<dbReference type="EC" id="7.1.1.-" evidence="1"/>
<dbReference type="EMBL" id="AM398681">
    <property type="protein sequence ID" value="CAL44274.1"/>
    <property type="molecule type" value="Genomic_DNA"/>
</dbReference>
<dbReference type="RefSeq" id="WP_011964308.1">
    <property type="nucleotide sequence ID" value="NC_009613.3"/>
</dbReference>
<dbReference type="RefSeq" id="YP_001297075.1">
    <property type="nucleotide sequence ID" value="NC_009613.3"/>
</dbReference>
<dbReference type="SMR" id="A6H1Q0"/>
<dbReference type="STRING" id="402612.FP2218"/>
<dbReference type="EnsemblBacteria" id="CAL44274">
    <property type="protein sequence ID" value="CAL44274"/>
    <property type="gene ID" value="FP2218"/>
</dbReference>
<dbReference type="KEGG" id="fps:FP2218"/>
<dbReference type="PATRIC" id="fig|402612.5.peg.2268"/>
<dbReference type="eggNOG" id="COG1007">
    <property type="taxonomic scope" value="Bacteria"/>
</dbReference>
<dbReference type="HOGENOM" id="CLU_007100_1_4_10"/>
<dbReference type="OrthoDB" id="9811718at2"/>
<dbReference type="Proteomes" id="UP000006394">
    <property type="component" value="Chromosome"/>
</dbReference>
<dbReference type="GO" id="GO:0005886">
    <property type="term" value="C:plasma membrane"/>
    <property type="evidence" value="ECO:0007669"/>
    <property type="project" value="UniProtKB-SubCell"/>
</dbReference>
<dbReference type="GO" id="GO:0008137">
    <property type="term" value="F:NADH dehydrogenase (ubiquinone) activity"/>
    <property type="evidence" value="ECO:0007669"/>
    <property type="project" value="InterPro"/>
</dbReference>
<dbReference type="GO" id="GO:0050136">
    <property type="term" value="F:NADH:ubiquinone reductase (non-electrogenic) activity"/>
    <property type="evidence" value="ECO:0007669"/>
    <property type="project" value="UniProtKB-UniRule"/>
</dbReference>
<dbReference type="GO" id="GO:0048038">
    <property type="term" value="F:quinone binding"/>
    <property type="evidence" value="ECO:0007669"/>
    <property type="project" value="UniProtKB-KW"/>
</dbReference>
<dbReference type="GO" id="GO:0042773">
    <property type="term" value="P:ATP synthesis coupled electron transport"/>
    <property type="evidence" value="ECO:0007669"/>
    <property type="project" value="InterPro"/>
</dbReference>
<dbReference type="HAMAP" id="MF_00445">
    <property type="entry name" value="NDH1_NuoN_1"/>
    <property type="match status" value="1"/>
</dbReference>
<dbReference type="InterPro" id="IPR010096">
    <property type="entry name" value="NADH-Q_OxRdtase_suN/2"/>
</dbReference>
<dbReference type="InterPro" id="IPR001750">
    <property type="entry name" value="ND/Mrp_TM"/>
</dbReference>
<dbReference type="NCBIfam" id="TIGR01770">
    <property type="entry name" value="NDH_I_N"/>
    <property type="match status" value="1"/>
</dbReference>
<dbReference type="PANTHER" id="PTHR22773">
    <property type="entry name" value="NADH DEHYDROGENASE"/>
    <property type="match status" value="1"/>
</dbReference>
<dbReference type="Pfam" id="PF00361">
    <property type="entry name" value="Proton_antipo_M"/>
    <property type="match status" value="1"/>
</dbReference>
<evidence type="ECO:0000255" key="1">
    <source>
        <dbReference type="HAMAP-Rule" id="MF_00445"/>
    </source>
</evidence>
<sequence>MNTLIYISALGILSLLAEIFNARKAIVPITIIGLLAIFGFNISEYNHLGSYYNNMMVVDKFSVAFSSLFIIITVFLVALSHEFYKEQKTKISDYVGIKVFLLSGAVAMVSFGNLSMFFLGIEVLSISLYILAASNRLNLKSNEAGMKYFLMGSFASGIILFGICLIYGATGSFDLNKILILINTQAYPQWYYIGIVFLLIGMLFKIATVPFHFWAPDVYEGSPALTTATMSTLAKIVAMATLYKLVTVLLPIQLYSIQIIIVCVAIASMLLGNIMALRQNNVKRMFAFSGISHAGFMVSTLLLTSNAASTLLYYASAYAIAGIAFFAVVMYVTKDKENETINSFNGLGKTHPLLAGILTAALLSMAGIPVLSGFFAKFFLLNQLVYTDWLIVVFVAIISSIISVGYYFKIIIAMYTKESEQTLPNVPVMYQIVAVVALILNIALGLFPNVVLKLL</sequence>
<proteinExistence type="inferred from homology"/>
<organism>
    <name type="scientific">Flavobacterium psychrophilum (strain ATCC 49511 / DSM 21280 / CIP 103535 / JIP02/86)</name>
    <dbReference type="NCBI Taxonomy" id="402612"/>
    <lineage>
        <taxon>Bacteria</taxon>
        <taxon>Pseudomonadati</taxon>
        <taxon>Bacteroidota</taxon>
        <taxon>Flavobacteriia</taxon>
        <taxon>Flavobacteriales</taxon>
        <taxon>Flavobacteriaceae</taxon>
        <taxon>Flavobacterium</taxon>
    </lineage>
</organism>
<reference key="1">
    <citation type="journal article" date="2007" name="Nat. Biotechnol.">
        <title>Complete genome sequence of the fish pathogen Flavobacterium psychrophilum.</title>
        <authorList>
            <person name="Duchaud E."/>
            <person name="Boussaha M."/>
            <person name="Loux V."/>
            <person name="Bernardet J.-F."/>
            <person name="Michel C."/>
            <person name="Kerouault B."/>
            <person name="Mondot S."/>
            <person name="Nicolas P."/>
            <person name="Bossy R."/>
            <person name="Caron C."/>
            <person name="Bessieres P."/>
            <person name="Gibrat J.-F."/>
            <person name="Claverol S."/>
            <person name="Dumetz F."/>
            <person name="Le Henaff M."/>
            <person name="Benmansour A."/>
        </authorList>
    </citation>
    <scope>NUCLEOTIDE SEQUENCE [LARGE SCALE GENOMIC DNA]</scope>
    <source>
        <strain>ATCC 49511 / DSM 21280 / CIP 103535 / JIP02/86</strain>
    </source>
</reference>
<name>NUON_FLAPJ</name>
<keyword id="KW-0997">Cell inner membrane</keyword>
<keyword id="KW-1003">Cell membrane</keyword>
<keyword id="KW-0472">Membrane</keyword>
<keyword id="KW-0520">NAD</keyword>
<keyword id="KW-0874">Quinone</keyword>
<keyword id="KW-1185">Reference proteome</keyword>
<keyword id="KW-1278">Translocase</keyword>
<keyword id="KW-0812">Transmembrane</keyword>
<keyword id="KW-1133">Transmembrane helix</keyword>
<keyword id="KW-0813">Transport</keyword>
<accession>A6H1Q0</accession>
<comment type="function">
    <text evidence="1">NDH-1 shuttles electrons from NADH, via FMN and iron-sulfur (Fe-S) centers, to quinones in the respiratory chain. The immediate electron acceptor for the enzyme in this species is believed to be a menaquinone. Couples the redox reaction to proton translocation (for every two electrons transferred, four hydrogen ions are translocated across the cytoplasmic membrane), and thus conserves the redox energy in a proton gradient.</text>
</comment>
<comment type="catalytic activity">
    <reaction evidence="1">
        <text>a quinone + NADH + 5 H(+)(in) = a quinol + NAD(+) + 4 H(+)(out)</text>
        <dbReference type="Rhea" id="RHEA:57888"/>
        <dbReference type="ChEBI" id="CHEBI:15378"/>
        <dbReference type="ChEBI" id="CHEBI:24646"/>
        <dbReference type="ChEBI" id="CHEBI:57540"/>
        <dbReference type="ChEBI" id="CHEBI:57945"/>
        <dbReference type="ChEBI" id="CHEBI:132124"/>
    </reaction>
</comment>
<comment type="subunit">
    <text evidence="1">NDH-1 is composed of 14 different subunits. Subunits NuoA, H, J, K, L, M, N constitute the membrane sector of the complex.</text>
</comment>
<comment type="subcellular location">
    <subcellularLocation>
        <location evidence="1">Cell inner membrane</location>
        <topology evidence="1">Multi-pass membrane protein</topology>
    </subcellularLocation>
</comment>
<comment type="similarity">
    <text evidence="1">Belongs to the complex I subunit 2 family.</text>
</comment>
<gene>
    <name evidence="1" type="primary">nuoN</name>
    <name type="ordered locus">FP2218</name>
</gene>
<protein>
    <recommendedName>
        <fullName evidence="1">NADH-quinone oxidoreductase subunit N</fullName>
        <ecNumber evidence="1">7.1.1.-</ecNumber>
    </recommendedName>
    <alternativeName>
        <fullName evidence="1">NADH dehydrogenase I subunit N</fullName>
    </alternativeName>
    <alternativeName>
        <fullName evidence="1">NDH-1 subunit N</fullName>
    </alternativeName>
</protein>
<feature type="chain" id="PRO_0000391146" description="NADH-quinone oxidoreductase subunit N">
    <location>
        <begin position="1"/>
        <end position="455"/>
    </location>
</feature>
<feature type="transmembrane region" description="Helical" evidence="1">
    <location>
        <begin position="25"/>
        <end position="45"/>
    </location>
</feature>
<feature type="transmembrane region" description="Helical" evidence="1">
    <location>
        <begin position="61"/>
        <end position="81"/>
    </location>
</feature>
<feature type="transmembrane region" description="Helical" evidence="1">
    <location>
        <begin position="99"/>
        <end position="119"/>
    </location>
</feature>
<feature type="transmembrane region" description="Helical" evidence="1">
    <location>
        <begin position="149"/>
        <end position="169"/>
    </location>
</feature>
<feature type="transmembrane region" description="Helical" evidence="1">
    <location>
        <begin position="193"/>
        <end position="213"/>
    </location>
</feature>
<feature type="transmembrane region" description="Helical" evidence="1">
    <location>
        <begin position="257"/>
        <end position="277"/>
    </location>
</feature>
<feature type="transmembrane region" description="Helical" evidence="1">
    <location>
        <begin position="285"/>
        <end position="305"/>
    </location>
</feature>
<feature type="transmembrane region" description="Helical" evidence="1">
    <location>
        <begin position="312"/>
        <end position="332"/>
    </location>
</feature>
<feature type="transmembrane region" description="Helical" evidence="1">
    <location>
        <begin position="355"/>
        <end position="375"/>
    </location>
</feature>
<feature type="transmembrane region" description="Helical" evidence="1">
    <location>
        <begin position="391"/>
        <end position="411"/>
    </location>
</feature>
<feature type="transmembrane region" description="Helical" evidence="1">
    <location>
        <begin position="432"/>
        <end position="452"/>
    </location>
</feature>